<comment type="catalytic activity">
    <reaction>
        <text>tRNA(Cys) + L-cysteine + ATP = L-cysteinyl-tRNA(Cys) + AMP + diphosphate</text>
        <dbReference type="Rhea" id="RHEA:17773"/>
        <dbReference type="Rhea" id="RHEA-COMP:9661"/>
        <dbReference type="Rhea" id="RHEA-COMP:9679"/>
        <dbReference type="ChEBI" id="CHEBI:30616"/>
        <dbReference type="ChEBI" id="CHEBI:33019"/>
        <dbReference type="ChEBI" id="CHEBI:35235"/>
        <dbReference type="ChEBI" id="CHEBI:78442"/>
        <dbReference type="ChEBI" id="CHEBI:78517"/>
        <dbReference type="ChEBI" id="CHEBI:456215"/>
        <dbReference type="EC" id="6.1.1.16"/>
    </reaction>
</comment>
<comment type="cofactor">
    <cofactor evidence="1">
        <name>Zn(2+)</name>
        <dbReference type="ChEBI" id="CHEBI:29105"/>
    </cofactor>
    <text evidence="1">Binds 1 zinc ion per subunit.</text>
</comment>
<comment type="subunit">
    <text evidence="1">Monomer.</text>
</comment>
<comment type="subcellular location">
    <subcellularLocation>
        <location evidence="1">Cytoplasm</location>
    </subcellularLocation>
</comment>
<comment type="similarity">
    <text evidence="2">Belongs to the class-I aminoacyl-tRNA synthetase family.</text>
</comment>
<gene>
    <name type="primary">cysS</name>
    <name type="ordered locus">HP_0886</name>
</gene>
<dbReference type="EC" id="6.1.1.16"/>
<dbReference type="EMBL" id="AE000511">
    <property type="protein sequence ID" value="AAD07934.1"/>
    <property type="molecule type" value="Genomic_DNA"/>
</dbReference>
<dbReference type="EMBL" id="U05676">
    <property type="protein sequence ID" value="AAA17656.1"/>
    <property type="molecule type" value="Unassigned_DNA"/>
</dbReference>
<dbReference type="EMBL" id="U07145">
    <property type="protein sequence ID" value="AAA18866.1"/>
    <property type="molecule type" value="Unassigned_DNA"/>
</dbReference>
<dbReference type="PIR" id="F64630">
    <property type="entry name" value="F64630"/>
</dbReference>
<dbReference type="RefSeq" id="NP_207679.1">
    <property type="nucleotide sequence ID" value="NC_000915.1"/>
</dbReference>
<dbReference type="RefSeq" id="WP_000471359.1">
    <property type="nucleotide sequence ID" value="NC_018939.1"/>
</dbReference>
<dbReference type="SMR" id="P41259"/>
<dbReference type="DIP" id="DIP-3687N"/>
<dbReference type="FunCoup" id="P41259">
    <property type="interactions" value="332"/>
</dbReference>
<dbReference type="IntAct" id="P41259">
    <property type="interactions" value="1"/>
</dbReference>
<dbReference type="MINT" id="P41259"/>
<dbReference type="STRING" id="85962.HP_0886"/>
<dbReference type="PaxDb" id="85962-C694_04540"/>
<dbReference type="EnsemblBacteria" id="AAD07934">
    <property type="protein sequence ID" value="AAD07934"/>
    <property type="gene ID" value="HP_0886"/>
</dbReference>
<dbReference type="KEGG" id="heo:C694_04540"/>
<dbReference type="KEGG" id="hpy:HP_0886"/>
<dbReference type="PATRIC" id="fig|85962.47.peg.942"/>
<dbReference type="eggNOG" id="COG0215">
    <property type="taxonomic scope" value="Bacteria"/>
</dbReference>
<dbReference type="InParanoid" id="P41259"/>
<dbReference type="OrthoDB" id="9815130at2"/>
<dbReference type="PhylomeDB" id="P41259"/>
<dbReference type="Proteomes" id="UP000000429">
    <property type="component" value="Chromosome"/>
</dbReference>
<dbReference type="GO" id="GO:0005737">
    <property type="term" value="C:cytoplasm"/>
    <property type="evidence" value="ECO:0000318"/>
    <property type="project" value="GO_Central"/>
</dbReference>
<dbReference type="GO" id="GO:0005829">
    <property type="term" value="C:cytosol"/>
    <property type="evidence" value="ECO:0000318"/>
    <property type="project" value="GO_Central"/>
</dbReference>
<dbReference type="GO" id="GO:0005524">
    <property type="term" value="F:ATP binding"/>
    <property type="evidence" value="ECO:0000318"/>
    <property type="project" value="GO_Central"/>
</dbReference>
<dbReference type="GO" id="GO:0004817">
    <property type="term" value="F:cysteine-tRNA ligase activity"/>
    <property type="evidence" value="ECO:0000318"/>
    <property type="project" value="GO_Central"/>
</dbReference>
<dbReference type="GO" id="GO:0008270">
    <property type="term" value="F:zinc ion binding"/>
    <property type="evidence" value="ECO:0007669"/>
    <property type="project" value="UniProtKB-UniRule"/>
</dbReference>
<dbReference type="GO" id="GO:0006423">
    <property type="term" value="P:cysteinyl-tRNA aminoacylation"/>
    <property type="evidence" value="ECO:0000318"/>
    <property type="project" value="GO_Central"/>
</dbReference>
<dbReference type="CDD" id="cd00672">
    <property type="entry name" value="CysRS_core"/>
    <property type="match status" value="1"/>
</dbReference>
<dbReference type="FunFam" id="1.20.120.1910:FF:000013">
    <property type="entry name" value="Cysteine--tRNA ligase"/>
    <property type="match status" value="1"/>
</dbReference>
<dbReference type="FunFam" id="3.40.50.620:FF:000339">
    <property type="entry name" value="Cysteine--tRNA ligase"/>
    <property type="match status" value="1"/>
</dbReference>
<dbReference type="Gene3D" id="1.20.120.1910">
    <property type="entry name" value="Cysteine-tRNA ligase, C-terminal anti-codon recognition domain"/>
    <property type="match status" value="1"/>
</dbReference>
<dbReference type="Gene3D" id="3.40.50.620">
    <property type="entry name" value="HUPs"/>
    <property type="match status" value="1"/>
</dbReference>
<dbReference type="HAMAP" id="MF_00041">
    <property type="entry name" value="Cys_tRNA_synth"/>
    <property type="match status" value="1"/>
</dbReference>
<dbReference type="InterPro" id="IPR015803">
    <property type="entry name" value="Cys-tRNA-ligase"/>
</dbReference>
<dbReference type="InterPro" id="IPR015273">
    <property type="entry name" value="Cys-tRNA-synt_Ia_DALR"/>
</dbReference>
<dbReference type="InterPro" id="IPR024909">
    <property type="entry name" value="Cys-tRNA/MSH_ligase"/>
</dbReference>
<dbReference type="InterPro" id="IPR014729">
    <property type="entry name" value="Rossmann-like_a/b/a_fold"/>
</dbReference>
<dbReference type="InterPro" id="IPR032678">
    <property type="entry name" value="tRNA-synt_1_cat_dom"/>
</dbReference>
<dbReference type="InterPro" id="IPR009080">
    <property type="entry name" value="tRNAsynth_Ia_anticodon-bd"/>
</dbReference>
<dbReference type="NCBIfam" id="TIGR00435">
    <property type="entry name" value="cysS"/>
    <property type="match status" value="1"/>
</dbReference>
<dbReference type="PANTHER" id="PTHR10890:SF3">
    <property type="entry name" value="CYSTEINE--TRNA LIGASE, CYTOPLASMIC"/>
    <property type="match status" value="1"/>
</dbReference>
<dbReference type="PANTHER" id="PTHR10890">
    <property type="entry name" value="CYSTEINYL-TRNA SYNTHETASE"/>
    <property type="match status" value="1"/>
</dbReference>
<dbReference type="Pfam" id="PF09190">
    <property type="entry name" value="DALR_2"/>
    <property type="match status" value="1"/>
</dbReference>
<dbReference type="Pfam" id="PF01406">
    <property type="entry name" value="tRNA-synt_1e"/>
    <property type="match status" value="1"/>
</dbReference>
<dbReference type="PRINTS" id="PR00983">
    <property type="entry name" value="TRNASYNTHCYS"/>
</dbReference>
<dbReference type="SMART" id="SM00840">
    <property type="entry name" value="DALR_2"/>
    <property type="match status" value="1"/>
</dbReference>
<dbReference type="SUPFAM" id="SSF47323">
    <property type="entry name" value="Anticodon-binding domain of a subclass of class I aminoacyl-tRNA synthetases"/>
    <property type="match status" value="1"/>
</dbReference>
<dbReference type="SUPFAM" id="SSF52374">
    <property type="entry name" value="Nucleotidylyl transferase"/>
    <property type="match status" value="1"/>
</dbReference>
<keyword id="KW-0030">Aminoacyl-tRNA synthetase</keyword>
<keyword id="KW-0067">ATP-binding</keyword>
<keyword id="KW-0963">Cytoplasm</keyword>
<keyword id="KW-0436">Ligase</keyword>
<keyword id="KW-0479">Metal-binding</keyword>
<keyword id="KW-0547">Nucleotide-binding</keyword>
<keyword id="KW-0648">Protein biosynthesis</keyword>
<keyword id="KW-1185">Reference proteome</keyword>
<keyword id="KW-0862">Zinc</keyword>
<proteinExistence type="inferred from homology"/>
<name>SYC_HELPY</name>
<organism>
    <name type="scientific">Helicobacter pylori (strain ATCC 700392 / 26695)</name>
    <name type="common">Campylobacter pylori</name>
    <dbReference type="NCBI Taxonomy" id="85962"/>
    <lineage>
        <taxon>Bacteria</taxon>
        <taxon>Pseudomonadati</taxon>
        <taxon>Campylobacterota</taxon>
        <taxon>Epsilonproteobacteria</taxon>
        <taxon>Campylobacterales</taxon>
        <taxon>Helicobacteraceae</taxon>
        <taxon>Helicobacter</taxon>
    </lineage>
</organism>
<evidence type="ECO:0000250" key="1"/>
<evidence type="ECO:0000305" key="2"/>
<sequence>MFIYDTKLKQKVPFEPLVQNKANIYVCGPTVYDDAHLGHARSAIAFDLLRRTLELSGYEVMLVRNFTDIDDKIINKALKENKSIQELSSIYIESYTRDLNALNVKKPSLEPKASEYLDAMVGMIETLLEKNIAYQVSNGDIYLDTSKDKDYGSLSVHNSSIEFGRIGLVQEKRLEQDFVLWKSYKGDNDVGFDSPLGKGRPGWHIECSSMVFETLALTNTPYQIDIHAGGADLLFPHHENEACQTRCAFGVELAKYWMHNGFVNINNEKMSKSLGNSFFVKDALKNYDGEILRNYLLGVHYRSVLNFNEEDLLVSKKRLDKIYRLKQRVLGTLGGINPNFKKEILECMQDDLNVSKALSVLESMLSSTNEKLDQNPKNKALKGEILANLKFIEELLGIGFKDPSAYFQLGVSESEKQEIENKIEERKRAKERKDFLKADSIREELLKQKIALMDTPQGTIWEKFF</sequence>
<reference key="1">
    <citation type="journal article" date="1997" name="Nature">
        <title>The complete genome sequence of the gastric pathogen Helicobacter pylori.</title>
        <authorList>
            <person name="Tomb J.-F."/>
            <person name="White O."/>
            <person name="Kerlavage A.R."/>
            <person name="Clayton R.A."/>
            <person name="Sutton G.G."/>
            <person name="Fleischmann R.D."/>
            <person name="Ketchum K.A."/>
            <person name="Klenk H.-P."/>
            <person name="Gill S.R."/>
            <person name="Dougherty B.A."/>
            <person name="Nelson K.E."/>
            <person name="Quackenbush J."/>
            <person name="Zhou L."/>
            <person name="Kirkness E.F."/>
            <person name="Peterson S.N."/>
            <person name="Loftus B.J."/>
            <person name="Richardson D.L."/>
            <person name="Dodson R.J."/>
            <person name="Khalak H.G."/>
            <person name="Glodek A."/>
            <person name="McKenney K."/>
            <person name="FitzGerald L.M."/>
            <person name="Lee N."/>
            <person name="Adams M.D."/>
            <person name="Hickey E.K."/>
            <person name="Berg D.E."/>
            <person name="Gocayne J.D."/>
            <person name="Utterback T.R."/>
            <person name="Peterson J.D."/>
            <person name="Kelley J.M."/>
            <person name="Cotton M.D."/>
            <person name="Weidman J.F."/>
            <person name="Fujii C."/>
            <person name="Bowman C."/>
            <person name="Watthey L."/>
            <person name="Wallin E."/>
            <person name="Hayes W.S."/>
            <person name="Borodovsky M."/>
            <person name="Karp P.D."/>
            <person name="Smith H.O."/>
            <person name="Fraser C.M."/>
            <person name="Venter J.C."/>
        </authorList>
    </citation>
    <scope>NUCLEOTIDE SEQUENCE [LARGE SCALE GENOMIC DNA]</scope>
    <source>
        <strain>ATCC 700392 / 26695</strain>
    </source>
</reference>
<reference key="2">
    <citation type="journal article" date="1994" name="J. Biol. Chem.">
        <title>Divergence of genetic sequences for the vacuolating cytotoxin among Helicobacter pylori strains.</title>
        <authorList>
            <person name="Cover T.L."/>
            <person name="Tummuru M.K."/>
            <person name="Cao P."/>
            <person name="Thompson S.A."/>
            <person name="Blaser M.J."/>
        </authorList>
    </citation>
    <scope>NUCLEOTIDE SEQUENCE [GENOMIC DNA] OF 278-465</scope>
    <source>
        <strain>ATCC 49503 / 60190</strain>
    </source>
</reference>
<reference key="3">
    <citation type="journal article" date="1994" name="Infect. Immun.">
        <title>Pathological significance and molecular characterization of the vacuolating toxin gene of Helicobacter pylori.</title>
        <authorList>
            <person name="Phadnis S.H."/>
            <person name="Ilver D.J."/>
            <person name="Janzon L."/>
            <person name="Normark S."/>
            <person name="Westblom T.U."/>
        </authorList>
    </citation>
    <scope>NUCLEOTIDE SEQUENCE [GENOMIC DNA] OF 407-465</scope>
    <source>
        <strain>DSM 4867 / CCUG 17874 / NCTC 11638</strain>
    </source>
</reference>
<feature type="chain" id="PRO_0000159409" description="Cysteine--tRNA ligase">
    <location>
        <begin position="1"/>
        <end position="465"/>
    </location>
</feature>
<feature type="short sequence motif" description="'HIGH' region">
    <location>
        <begin position="29"/>
        <end position="39"/>
    </location>
</feature>
<feature type="short sequence motif" description="'KMSKS' region">
    <location>
        <begin position="269"/>
        <end position="273"/>
    </location>
</feature>
<feature type="binding site" evidence="1">
    <location>
        <position position="27"/>
    </location>
    <ligand>
        <name>Zn(2+)</name>
        <dbReference type="ChEBI" id="CHEBI:29105"/>
    </ligand>
</feature>
<feature type="binding site" evidence="1">
    <location>
        <position position="207"/>
    </location>
    <ligand>
        <name>Zn(2+)</name>
        <dbReference type="ChEBI" id="CHEBI:29105"/>
    </ligand>
</feature>
<feature type="binding site" evidence="1">
    <location>
        <position position="237"/>
    </location>
    <ligand>
        <name>Zn(2+)</name>
        <dbReference type="ChEBI" id="CHEBI:29105"/>
    </ligand>
</feature>
<feature type="binding site" evidence="1">
    <location>
        <position position="241"/>
    </location>
    <ligand>
        <name>Zn(2+)</name>
        <dbReference type="ChEBI" id="CHEBI:29105"/>
    </ligand>
</feature>
<feature type="binding site" evidence="1">
    <location>
        <position position="272"/>
    </location>
    <ligand>
        <name>ATP</name>
        <dbReference type="ChEBI" id="CHEBI:30616"/>
    </ligand>
</feature>
<feature type="sequence variant" description="In strain: ATCC 49503.">
    <original>V</original>
    <variation>I</variation>
    <location>
        <position position="280"/>
    </location>
</feature>
<feature type="sequence variant" description="In strain: ATCC 49503.">
    <original>T</original>
    <variation>N</variation>
    <location>
        <position position="332"/>
    </location>
</feature>
<feature type="sequence variant" description="In strain: ATCC 49503.">
    <original>I</original>
    <variation>V</variation>
    <location>
        <position position="392"/>
    </location>
</feature>
<feature type="sequence variant" description="In strain: ATCC 49503 and NCTC 11638.">
    <original>R</original>
    <variation>Q</variation>
    <location>
        <position position="432"/>
    </location>
</feature>
<feature type="sequence variant" description="In strain: NCTC 11638.">
    <original>D</original>
    <variation>N</variation>
    <location>
        <position position="434"/>
    </location>
</feature>
<feature type="sequence variant" description="In strain: ATCC 49503.">
    <original>S</original>
    <variation>H</variation>
    <location>
        <position position="440"/>
    </location>
</feature>
<protein>
    <recommendedName>
        <fullName>Cysteine--tRNA ligase</fullName>
        <ecNumber>6.1.1.16</ecNumber>
    </recommendedName>
    <alternativeName>
        <fullName>Cysteinyl-tRNA synthetase</fullName>
        <shortName>CysRS</shortName>
    </alternativeName>
</protein>
<accession>P41259</accession>